<evidence type="ECO:0000250" key="1">
    <source>
        <dbReference type="UniProtKB" id="Q7K1V5"/>
    </source>
</evidence>
<evidence type="ECO:0000255" key="2"/>
<evidence type="ECO:0000305" key="3"/>
<keyword id="KW-0256">Endoplasmic reticulum</keyword>
<keyword id="KW-0472">Membrane</keyword>
<keyword id="KW-1185">Reference proteome</keyword>
<keyword id="KW-0812">Transmembrane</keyword>
<keyword id="KW-1133">Transmembrane helix</keyword>
<reference key="1">
    <citation type="journal article" date="2003" name="PLoS Biol.">
        <title>The genome sequence of Caenorhabditis briggsae: a platform for comparative genomics.</title>
        <authorList>
            <person name="Stein L.D."/>
            <person name="Bao Z."/>
            <person name="Blasiar D."/>
            <person name="Blumenthal T."/>
            <person name="Brent M.R."/>
            <person name="Chen N."/>
            <person name="Chinwalla A."/>
            <person name="Clarke L."/>
            <person name="Clee C."/>
            <person name="Coghlan A."/>
            <person name="Coulson A."/>
            <person name="D'Eustachio P."/>
            <person name="Fitch D.H.A."/>
            <person name="Fulton L.A."/>
            <person name="Fulton R.E."/>
            <person name="Griffiths-Jones S."/>
            <person name="Harris T.W."/>
            <person name="Hillier L.W."/>
            <person name="Kamath R."/>
            <person name="Kuwabara P.E."/>
            <person name="Mardis E.R."/>
            <person name="Marra M.A."/>
            <person name="Miner T.L."/>
            <person name="Minx P."/>
            <person name="Mullikin J.C."/>
            <person name="Plumb R.W."/>
            <person name="Rogers J."/>
            <person name="Schein J.E."/>
            <person name="Sohrmann M."/>
            <person name="Spieth J."/>
            <person name="Stajich J.E."/>
            <person name="Wei C."/>
            <person name="Willey D."/>
            <person name="Wilson R.K."/>
            <person name="Durbin R.M."/>
            <person name="Waterston R.H."/>
        </authorList>
    </citation>
    <scope>NUCLEOTIDE SEQUENCE [LARGE SCALE GENOMIC DNA]</scope>
    <source>
        <strain>AF16</strain>
    </source>
</reference>
<dbReference type="EMBL" id="HE601474">
    <property type="protein sequence ID" value="CAP36971.3"/>
    <property type="molecule type" value="Genomic_DNA"/>
</dbReference>
<dbReference type="RefSeq" id="XP_002640680.1">
    <property type="nucleotide sequence ID" value="XM_002640634.1"/>
</dbReference>
<dbReference type="SMR" id="P0C655"/>
<dbReference type="FunCoup" id="P0C655">
    <property type="interactions" value="2418"/>
</dbReference>
<dbReference type="STRING" id="6238.P0C655"/>
<dbReference type="EnsemblMetazoa" id="CBG19742.1">
    <property type="protein sequence ID" value="CBG19742.1"/>
    <property type="gene ID" value="WBGene00038912"/>
</dbReference>
<dbReference type="GeneID" id="8582675"/>
<dbReference type="KEGG" id="cbr:CBG_19742"/>
<dbReference type="CTD" id="8582675"/>
<dbReference type="WormBase" id="CBG19742">
    <property type="protein sequence ID" value="CBP19703"/>
    <property type="gene ID" value="WBGene00038912"/>
</dbReference>
<dbReference type="eggNOG" id="KOG4054">
    <property type="taxonomic scope" value="Eukaryota"/>
</dbReference>
<dbReference type="HOGENOM" id="CLU_121621_0_0_1"/>
<dbReference type="InParanoid" id="P0C655"/>
<dbReference type="OMA" id="PYGVLWY"/>
<dbReference type="Proteomes" id="UP000008549">
    <property type="component" value="Unassembled WGS sequence"/>
</dbReference>
<dbReference type="GO" id="GO:0005789">
    <property type="term" value="C:endoplasmic reticulum membrane"/>
    <property type="evidence" value="ECO:0000318"/>
    <property type="project" value="GO_Central"/>
</dbReference>
<dbReference type="GO" id="GO:0007029">
    <property type="term" value="P:endoplasmic reticulum organization"/>
    <property type="evidence" value="ECO:0000318"/>
    <property type="project" value="GO_Central"/>
</dbReference>
<dbReference type="GO" id="GO:0016192">
    <property type="term" value="P:vesicle-mediated transport"/>
    <property type="evidence" value="ECO:0000318"/>
    <property type="project" value="GO_Central"/>
</dbReference>
<dbReference type="InterPro" id="IPR009787">
    <property type="entry name" value="Jagunal"/>
</dbReference>
<dbReference type="PANTHER" id="PTHR20955">
    <property type="entry name" value="PROTEIN JAGUNAL HOMOLOG 1"/>
    <property type="match status" value="1"/>
</dbReference>
<dbReference type="PANTHER" id="PTHR20955:SF1">
    <property type="entry name" value="PROTEIN JAGUNAL HOMOLOG 1"/>
    <property type="match status" value="1"/>
</dbReference>
<dbReference type="Pfam" id="PF07086">
    <property type="entry name" value="Jagunal"/>
    <property type="match status" value="1"/>
</dbReference>
<accession>P0C655</accession>
<accession>A8XWF2</accession>
<gene>
    <name type="ORF">CBG19742</name>
</gene>
<proteinExistence type="inferred from homology"/>
<organism>
    <name type="scientific">Caenorhabditis briggsae</name>
    <dbReference type="NCBI Taxonomy" id="6238"/>
    <lineage>
        <taxon>Eukaryota</taxon>
        <taxon>Metazoa</taxon>
        <taxon>Ecdysozoa</taxon>
        <taxon>Nematoda</taxon>
        <taxon>Chromadorea</taxon>
        <taxon>Rhabditida</taxon>
        <taxon>Rhabditina</taxon>
        <taxon>Rhabditomorpha</taxon>
        <taxon>Rhabditoidea</taxon>
        <taxon>Rhabditidae</taxon>
        <taxon>Peloderinae</taxon>
        <taxon>Caenorhabditis</taxon>
    </lineage>
</organism>
<comment type="subcellular location">
    <subcellularLocation>
        <location evidence="1">Endoplasmic reticulum membrane</location>
        <topology evidence="1">Multi-pass membrane protein</topology>
    </subcellularLocation>
</comment>
<comment type="similarity">
    <text evidence="3">Belongs to the jagunal family.</text>
</comment>
<feature type="chain" id="PRO_0000313617" description="Protein jagunal homolog">
    <location>
        <begin position="1"/>
        <end position="189"/>
    </location>
</feature>
<feature type="topological domain" description="Cytoplasmic" evidence="2">
    <location>
        <begin position="1"/>
        <end position="34"/>
    </location>
</feature>
<feature type="transmembrane region" description="Helical" evidence="2">
    <location>
        <begin position="35"/>
        <end position="55"/>
    </location>
</feature>
<feature type="topological domain" description="Lumenal" evidence="2">
    <location>
        <begin position="56"/>
        <end position="75"/>
    </location>
</feature>
<feature type="transmembrane region" description="Helical" evidence="2">
    <location>
        <begin position="76"/>
        <end position="96"/>
    </location>
</feature>
<feature type="topological domain" description="Cytoplasmic" evidence="2">
    <location>
        <begin position="97"/>
        <end position="105"/>
    </location>
</feature>
<feature type="transmembrane region" description="Helical" evidence="2">
    <location>
        <begin position="106"/>
        <end position="126"/>
    </location>
</feature>
<feature type="topological domain" description="Lumenal" evidence="2">
    <location>
        <begin position="127"/>
        <end position="150"/>
    </location>
</feature>
<feature type="transmembrane region" description="Helical" evidence="2">
    <location>
        <begin position="151"/>
        <end position="171"/>
    </location>
</feature>
<feature type="topological domain" description="Cytoplasmic" evidence="2">
    <location>
        <begin position="172"/>
        <end position="189"/>
    </location>
</feature>
<protein>
    <recommendedName>
        <fullName evidence="1">Protein jagunal homolog</fullName>
    </recommendedName>
</protein>
<name>JAGN_CAEBR</name>
<sequence length="189" mass="22115">MSSRGVRAAGTDGNDFQNRQRIAQHYQESAQYKSVLKWFFVPHFLILVFMWLKVGSEFLRYNFGWKNAFFERLDMPAAYPWEYVWCLSFIPIVLALSSFQRNKLKVLHYAYYAEFICGIFPCMIGLGGQLPELLEYANDMEGSNTPTFKGIFPMVIIWYIFFAVALQIHGFSMYFMHHLAAAWAPVKRD</sequence>